<reference key="1">
    <citation type="journal article" date="2006" name="Proc. Natl. Acad. Sci. U.S.A.">
        <title>Comparative genomics of the lactic acid bacteria.</title>
        <authorList>
            <person name="Makarova K.S."/>
            <person name="Slesarev A."/>
            <person name="Wolf Y.I."/>
            <person name="Sorokin A."/>
            <person name="Mirkin B."/>
            <person name="Koonin E.V."/>
            <person name="Pavlov A."/>
            <person name="Pavlova N."/>
            <person name="Karamychev V."/>
            <person name="Polouchine N."/>
            <person name="Shakhova V."/>
            <person name="Grigoriev I."/>
            <person name="Lou Y."/>
            <person name="Rohksar D."/>
            <person name="Lucas S."/>
            <person name="Huang K."/>
            <person name="Goodstein D.M."/>
            <person name="Hawkins T."/>
            <person name="Plengvidhya V."/>
            <person name="Welker D."/>
            <person name="Hughes J."/>
            <person name="Goh Y."/>
            <person name="Benson A."/>
            <person name="Baldwin K."/>
            <person name="Lee J.-H."/>
            <person name="Diaz-Muniz I."/>
            <person name="Dosti B."/>
            <person name="Smeianov V."/>
            <person name="Wechter W."/>
            <person name="Barabote R."/>
            <person name="Lorca G."/>
            <person name="Altermann E."/>
            <person name="Barrangou R."/>
            <person name="Ganesan B."/>
            <person name="Xie Y."/>
            <person name="Rawsthorne H."/>
            <person name="Tamir D."/>
            <person name="Parker C."/>
            <person name="Breidt F."/>
            <person name="Broadbent J.R."/>
            <person name="Hutkins R."/>
            <person name="O'Sullivan D."/>
            <person name="Steele J."/>
            <person name="Unlu G."/>
            <person name="Saier M.H. Jr."/>
            <person name="Klaenhammer T."/>
            <person name="Richardson P."/>
            <person name="Kozyavkin S."/>
            <person name="Weimer B.C."/>
            <person name="Mills D.A."/>
        </authorList>
    </citation>
    <scope>NUCLEOTIDE SEQUENCE [LARGE SCALE GENOMIC DNA]</scope>
    <source>
        <strain>ATCC 25745 / CCUG 21536 / LMG 10740 / 183-1w</strain>
    </source>
</reference>
<protein>
    <recommendedName>
        <fullName evidence="1">Galactose-1-phosphate uridylyltransferase</fullName>
        <shortName evidence="1">Gal-1-P uridylyltransferase</shortName>
        <ecNumber evidence="1">2.7.7.12</ecNumber>
    </recommendedName>
    <alternativeName>
        <fullName evidence="1">UDP-glucose--hexose-1-phosphate uridylyltransferase</fullName>
    </alternativeName>
</protein>
<proteinExistence type="inferred from homology"/>
<gene>
    <name evidence="1" type="primary">galT</name>
    <name type="ordered locus">PEPE_0208</name>
</gene>
<organism>
    <name type="scientific">Pediococcus pentosaceus (strain ATCC 25745 / CCUG 21536 / LMG 10740 / 183-1w)</name>
    <dbReference type="NCBI Taxonomy" id="278197"/>
    <lineage>
        <taxon>Bacteria</taxon>
        <taxon>Bacillati</taxon>
        <taxon>Bacillota</taxon>
        <taxon>Bacilli</taxon>
        <taxon>Lactobacillales</taxon>
        <taxon>Lactobacillaceae</taxon>
        <taxon>Pediococcus</taxon>
    </lineage>
</organism>
<evidence type="ECO:0000255" key="1">
    <source>
        <dbReference type="HAMAP-Rule" id="MF_00571"/>
    </source>
</evidence>
<keyword id="KW-0119">Carbohydrate metabolism</keyword>
<keyword id="KW-0963">Cytoplasm</keyword>
<keyword id="KW-0299">Galactose metabolism</keyword>
<keyword id="KW-0548">Nucleotidyltransferase</keyword>
<keyword id="KW-0808">Transferase</keyword>
<feature type="chain" id="PRO_1000025026" description="Galactose-1-phosphate uridylyltransferase">
    <location>
        <begin position="1"/>
        <end position="486"/>
    </location>
</feature>
<name>GALT_PEDPA</name>
<sequence length="486" mass="54180">MSSLEQFVQVVIDSPSPYTNLDRIYVHNRILGLVGEDQPVEATDEQVTSLVDALVKTAVQNGKIEDAQSDRSILADQLMDLVTPLPSILNQRFWDKYQVSPKAATDYFFNLSKTNDYIKTRAIAKNVSFPAETDFGELEITINLSKPEKDPKAIAAARNQPQDGYPLCQLCMQNEGYLGRLGYPSRSNHRIIRMTLGGETWGFQYSPYAYFNEHSIFLDQIHRPMVINRQTFTNLLEIVKQLPHYFVGSNADLPIVGGSMLSHEHYQGGRHVFPMMKAPIARTIDLGVAGVEAGIVKWPMSTIRLVGSDVVALTDAAVKIHDAWMNYSDESVDVRAFTDGTRHHTTTPIAYKDGENYVLDVVLRDNQTSAEFPDGIFHPHQDVQHIKKENIGLIEVMGRAILPARLKTELVEVEKYLLGQTNQMAEMHQAWADQLKATNSITAENVTAVVNAAVGNVFARVLADAGVFKWDDAGEAAFARFISAIN</sequence>
<comment type="catalytic activity">
    <reaction evidence="1">
        <text>alpha-D-galactose 1-phosphate + UDP-alpha-D-glucose = alpha-D-glucose 1-phosphate + UDP-alpha-D-galactose</text>
        <dbReference type="Rhea" id="RHEA:13989"/>
        <dbReference type="ChEBI" id="CHEBI:58336"/>
        <dbReference type="ChEBI" id="CHEBI:58601"/>
        <dbReference type="ChEBI" id="CHEBI:58885"/>
        <dbReference type="ChEBI" id="CHEBI:66914"/>
        <dbReference type="EC" id="2.7.7.12"/>
    </reaction>
</comment>
<comment type="pathway">
    <text evidence="1">Carbohydrate metabolism; galactose metabolism.</text>
</comment>
<comment type="subcellular location">
    <subcellularLocation>
        <location evidence="1">Cytoplasm</location>
    </subcellularLocation>
</comment>
<comment type="similarity">
    <text evidence="1">Belongs to the galactose-1-phosphate uridylyltransferase type 2 family.</text>
</comment>
<dbReference type="EC" id="2.7.7.12" evidence="1"/>
<dbReference type="EMBL" id="CP000422">
    <property type="protein sequence ID" value="ABJ67309.1"/>
    <property type="molecule type" value="Genomic_DNA"/>
</dbReference>
<dbReference type="RefSeq" id="WP_011672926.1">
    <property type="nucleotide sequence ID" value="NC_008525.1"/>
</dbReference>
<dbReference type="STRING" id="278197.PEPE_0208"/>
<dbReference type="GeneID" id="33062312"/>
<dbReference type="KEGG" id="ppe:PEPE_0208"/>
<dbReference type="eggNOG" id="COG4468">
    <property type="taxonomic scope" value="Bacteria"/>
</dbReference>
<dbReference type="HOGENOM" id="CLU_047799_0_0_9"/>
<dbReference type="OrthoDB" id="2293at2"/>
<dbReference type="UniPathway" id="UPA00214"/>
<dbReference type="Proteomes" id="UP000000773">
    <property type="component" value="Chromosome"/>
</dbReference>
<dbReference type="GO" id="GO:0005737">
    <property type="term" value="C:cytoplasm"/>
    <property type="evidence" value="ECO:0007669"/>
    <property type="project" value="UniProtKB-SubCell"/>
</dbReference>
<dbReference type="GO" id="GO:0008108">
    <property type="term" value="F:UDP-glucose:hexose-1-phosphate uridylyltransferase activity"/>
    <property type="evidence" value="ECO:0007669"/>
    <property type="project" value="UniProtKB-UniRule"/>
</dbReference>
<dbReference type="GO" id="GO:0006012">
    <property type="term" value="P:galactose metabolic process"/>
    <property type="evidence" value="ECO:0007669"/>
    <property type="project" value="UniProtKB-UniRule"/>
</dbReference>
<dbReference type="HAMAP" id="MF_00571">
    <property type="entry name" value="GalP_UDP_trans"/>
    <property type="match status" value="1"/>
</dbReference>
<dbReference type="InterPro" id="IPR000766">
    <property type="entry name" value="GalP_uridyl_Trfase_II"/>
</dbReference>
<dbReference type="InterPro" id="IPR023425">
    <property type="entry name" value="GalP_uridyl_Trfase_II_CS"/>
</dbReference>
<dbReference type="InterPro" id="IPR005850">
    <property type="entry name" value="GalP_Utransf_C"/>
</dbReference>
<dbReference type="InterPro" id="IPR005849">
    <property type="entry name" value="GalP_Utransf_N"/>
</dbReference>
<dbReference type="NCBIfam" id="TIGR01239">
    <property type="entry name" value="galT_2"/>
    <property type="match status" value="1"/>
</dbReference>
<dbReference type="NCBIfam" id="NF003629">
    <property type="entry name" value="PRK05270.1-2"/>
    <property type="match status" value="1"/>
</dbReference>
<dbReference type="NCBIfam" id="NF003630">
    <property type="entry name" value="PRK05270.1-3"/>
    <property type="match status" value="1"/>
</dbReference>
<dbReference type="NCBIfam" id="NF003633">
    <property type="entry name" value="PRK05270.2-2"/>
    <property type="match status" value="1"/>
</dbReference>
<dbReference type="PANTHER" id="PTHR39191:SF1">
    <property type="entry name" value="DUF4922 DOMAIN-CONTAINING PROTEIN"/>
    <property type="match status" value="1"/>
</dbReference>
<dbReference type="PANTHER" id="PTHR39191">
    <property type="entry name" value="GALACTOSE-1-PHOSPHATE URIDYLYLTRANSFERASE"/>
    <property type="match status" value="1"/>
</dbReference>
<dbReference type="Pfam" id="PF02744">
    <property type="entry name" value="GalP_UDP_tr_C"/>
    <property type="match status" value="1"/>
</dbReference>
<dbReference type="Pfam" id="PF01087">
    <property type="entry name" value="GalP_UDP_transf"/>
    <property type="match status" value="1"/>
</dbReference>
<dbReference type="PIRSF" id="PIRSF006005">
    <property type="entry name" value="GalT_BS"/>
    <property type="match status" value="1"/>
</dbReference>
<dbReference type="PROSITE" id="PS01163">
    <property type="entry name" value="GAL_P_UDP_TRANSF_II"/>
    <property type="match status" value="1"/>
</dbReference>
<accession>Q03HL3</accession>